<name>CR16_RANCH</name>
<protein>
    <recommendedName>
        <fullName evidence="5">Caerin-1.6</fullName>
    </recommendedName>
    <component>
        <recommendedName>
            <fullName evidence="5">Caerin-1.6.1</fullName>
        </recommendedName>
    </component>
</protein>
<organism>
    <name type="scientific">Ranoidea chloris</name>
    <name type="common">Red-eyed tree frog</name>
    <name type="synonym">Litoria chloris</name>
    <dbReference type="NCBI Taxonomy" id="86064"/>
    <lineage>
        <taxon>Eukaryota</taxon>
        <taxon>Metazoa</taxon>
        <taxon>Chordata</taxon>
        <taxon>Craniata</taxon>
        <taxon>Vertebrata</taxon>
        <taxon>Euteleostomi</taxon>
        <taxon>Amphibia</taxon>
        <taxon>Batrachia</taxon>
        <taxon>Anura</taxon>
        <taxon>Neobatrachia</taxon>
        <taxon>Hyloidea</taxon>
        <taxon>Hylidae</taxon>
        <taxon>Pelodryadinae</taxon>
        <taxon>Ranoidea</taxon>
    </lineage>
</organism>
<dbReference type="SMR" id="P62547"/>
<dbReference type="GO" id="GO:0005576">
    <property type="term" value="C:extracellular region"/>
    <property type="evidence" value="ECO:0007669"/>
    <property type="project" value="UniProtKB-SubCell"/>
</dbReference>
<dbReference type="GO" id="GO:0042742">
    <property type="term" value="P:defense response to bacterium"/>
    <property type="evidence" value="ECO:0007669"/>
    <property type="project" value="UniProtKB-KW"/>
</dbReference>
<dbReference type="GO" id="GO:0045087">
    <property type="term" value="P:innate immune response"/>
    <property type="evidence" value="ECO:0007669"/>
    <property type="project" value="UniProtKB-KW"/>
</dbReference>
<dbReference type="InterPro" id="IPR010000">
    <property type="entry name" value="Caerin_1"/>
</dbReference>
<dbReference type="Pfam" id="PF07440">
    <property type="entry name" value="Caerin_1"/>
    <property type="match status" value="1"/>
</dbReference>
<keyword id="KW-0027">Amidation</keyword>
<keyword id="KW-0878">Amphibian defense peptide</keyword>
<keyword id="KW-0044">Antibiotic</keyword>
<keyword id="KW-0929">Antimicrobial</keyword>
<keyword id="KW-0903">Direct protein sequencing</keyword>
<keyword id="KW-0391">Immunity</keyword>
<keyword id="KW-0399">Innate immunity</keyword>
<keyword id="KW-0964">Secreted</keyword>
<evidence type="ECO:0000250" key="1"/>
<evidence type="ECO:0000250" key="2">
    <source>
        <dbReference type="UniProtKB" id="P81252"/>
    </source>
</evidence>
<evidence type="ECO:0000269" key="3">
    <source>
    </source>
</evidence>
<evidence type="ECO:0000269" key="4">
    <source>
    </source>
</evidence>
<evidence type="ECO:0000303" key="5">
    <source>
    </source>
</evidence>
<evidence type="ECO:0000305" key="6"/>
<evidence type="ECO:0000305" key="7">
    <source>
    </source>
</evidence>
<feature type="peptide" id="PRO_0000010178" description="Caerin-1.6" evidence="4">
    <location>
        <begin position="1"/>
        <end position="25"/>
    </location>
</feature>
<feature type="peptide" id="PRO_0000010179" description="Caerin-1.6.1" evidence="4">
    <location>
        <begin position="3"/>
        <end position="25"/>
    </location>
</feature>
<feature type="modified residue" description="Leucine amide" evidence="4">
    <location>
        <position position="25"/>
    </location>
</feature>
<sequence>GLFSVLGAVAKHVLPHVVPVIAEKL</sequence>
<reference key="1">
    <citation type="journal article" date="1998" name="J. Pept. Res.">
        <title>New antibiotic caerin 1 peptides from the skin secretion of the Australian tree frog Litoria chloris. Comparison of the activities of the caerin 1 peptides from the genus Litoria.</title>
        <authorList>
            <person name="Steinborner S.T."/>
            <person name="Currie G.J."/>
            <person name="Bowie J.H."/>
            <person name="Wallace J.C."/>
            <person name="Tyler M.J."/>
        </authorList>
    </citation>
    <scope>PROTEIN SEQUENCE</scope>
    <scope>AMIDATION AT LEU-25</scope>
    <scope>SUBCELLULAR LOCATION</scope>
    <source>
        <tissue>Skin secretion</tissue>
    </source>
</reference>
<reference key="2">
    <citation type="journal article" date="2002" name="Eur. J. Biochem.">
        <title>Amphibian peptides that inhibit neuronal nitric oxide synthase. Isolation of lesuerin from the skin secretion of the Australian stony creek frog Litoria lesueuri.</title>
        <authorList>
            <person name="Doyle J."/>
            <person name="Llewellyn L.E."/>
            <person name="Brinkworth C.S."/>
            <person name="Bowie J.H."/>
            <person name="Wegener K.L."/>
            <person name="Rozek T."/>
            <person name="Wabnitz P.A."/>
            <person name="Wallace J.C."/>
            <person name="Tyler M.J."/>
        </authorList>
    </citation>
    <scope>FUNCTION</scope>
</reference>
<accession>P62547</accession>
<accession>P56231</accession>
<accession>P81249</accession>
<comment type="function">
    <molecule>Caerin-1.6</molecule>
    <text evidence="2 3 4">Antimicrobial peptide (PubMed:9516047). Adopts an alpha helical conformation which can disrupt bacterial membranes (PubMed:9516047). Strongly inhibits the formation of NO by neuronal nitric oxide synthase (nNOS) at micromolar concentrations (PubMed:11784303). Acts by a non-competitive mechanism, probably by binding to calcium/calmodulin and as a consequence blocking calmodulin attachment to nNOS (By similarity).</text>
</comment>
<comment type="function">
    <molecule>Caerin-1.6.1</molecule>
    <text evidence="4">Does not show antimicrobial activity.</text>
</comment>
<comment type="subcellular location">
    <subcellularLocation>
        <location evidence="4">Secreted</location>
    </subcellularLocation>
</comment>
<comment type="tissue specificity">
    <text evidence="7">Expressed by the skin dorsal glands.</text>
</comment>
<comment type="domain">
    <text evidence="1">Contains two amphipathic alpha helix regions separated by a region of less-defined helicity and greater flexibility.</text>
</comment>
<comment type="similarity">
    <text evidence="6">Belongs to the frog skin active peptide (FSAP) family. Caerin subfamily.</text>
</comment>
<proteinExistence type="evidence at protein level"/>